<gene>
    <name evidence="1" type="primary">ruvB</name>
    <name type="ordered locus">SYNAS_07420</name>
    <name type="ORF">SYN_02971</name>
</gene>
<reference key="1">
    <citation type="journal article" date="2007" name="Proc. Natl. Acad. Sci. U.S.A.">
        <title>The genome of Syntrophus aciditrophicus: life at the thermodynamic limit of microbial growth.</title>
        <authorList>
            <person name="McInerney M.J."/>
            <person name="Rohlin L."/>
            <person name="Mouttaki H."/>
            <person name="Kim U."/>
            <person name="Krupp R.S."/>
            <person name="Rios-Hernandez L."/>
            <person name="Sieber J."/>
            <person name="Struchtemeyer C.G."/>
            <person name="Bhattacharyya A."/>
            <person name="Campbell J.W."/>
            <person name="Gunsalus R.P."/>
        </authorList>
    </citation>
    <scope>NUCLEOTIDE SEQUENCE [LARGE SCALE GENOMIC DNA]</scope>
    <source>
        <strain>SB</strain>
    </source>
</reference>
<name>RUVB_SYNAS</name>
<protein>
    <recommendedName>
        <fullName evidence="1">Holliday junction branch migration complex subunit RuvB</fullName>
        <ecNumber evidence="1">3.6.4.-</ecNumber>
    </recommendedName>
</protein>
<accession>Q2LRA8</accession>
<dbReference type="EC" id="3.6.4.-" evidence="1"/>
<dbReference type="EMBL" id="CP000252">
    <property type="protein sequence ID" value="ABC76621.1"/>
    <property type="molecule type" value="Genomic_DNA"/>
</dbReference>
<dbReference type="RefSeq" id="WP_011416655.1">
    <property type="nucleotide sequence ID" value="NC_007759.1"/>
</dbReference>
<dbReference type="SMR" id="Q2LRA8"/>
<dbReference type="FunCoup" id="Q2LRA8">
    <property type="interactions" value="259"/>
</dbReference>
<dbReference type="STRING" id="56780.SYN_02971"/>
<dbReference type="KEGG" id="sat:SYN_02971"/>
<dbReference type="eggNOG" id="COG2255">
    <property type="taxonomic scope" value="Bacteria"/>
</dbReference>
<dbReference type="HOGENOM" id="CLU_055599_1_0_7"/>
<dbReference type="InParanoid" id="Q2LRA8"/>
<dbReference type="OrthoDB" id="9804478at2"/>
<dbReference type="Proteomes" id="UP000001933">
    <property type="component" value="Chromosome"/>
</dbReference>
<dbReference type="GO" id="GO:0005737">
    <property type="term" value="C:cytoplasm"/>
    <property type="evidence" value="ECO:0007669"/>
    <property type="project" value="UniProtKB-SubCell"/>
</dbReference>
<dbReference type="GO" id="GO:0048476">
    <property type="term" value="C:Holliday junction resolvase complex"/>
    <property type="evidence" value="ECO:0007669"/>
    <property type="project" value="UniProtKB-UniRule"/>
</dbReference>
<dbReference type="GO" id="GO:0005524">
    <property type="term" value="F:ATP binding"/>
    <property type="evidence" value="ECO:0007669"/>
    <property type="project" value="UniProtKB-UniRule"/>
</dbReference>
<dbReference type="GO" id="GO:0016887">
    <property type="term" value="F:ATP hydrolysis activity"/>
    <property type="evidence" value="ECO:0007669"/>
    <property type="project" value="InterPro"/>
</dbReference>
<dbReference type="GO" id="GO:0000400">
    <property type="term" value="F:four-way junction DNA binding"/>
    <property type="evidence" value="ECO:0007669"/>
    <property type="project" value="UniProtKB-UniRule"/>
</dbReference>
<dbReference type="GO" id="GO:0009378">
    <property type="term" value="F:four-way junction helicase activity"/>
    <property type="evidence" value="ECO:0007669"/>
    <property type="project" value="InterPro"/>
</dbReference>
<dbReference type="GO" id="GO:0006310">
    <property type="term" value="P:DNA recombination"/>
    <property type="evidence" value="ECO:0007669"/>
    <property type="project" value="UniProtKB-UniRule"/>
</dbReference>
<dbReference type="GO" id="GO:0006281">
    <property type="term" value="P:DNA repair"/>
    <property type="evidence" value="ECO:0007669"/>
    <property type="project" value="UniProtKB-UniRule"/>
</dbReference>
<dbReference type="CDD" id="cd00009">
    <property type="entry name" value="AAA"/>
    <property type="match status" value="1"/>
</dbReference>
<dbReference type="Gene3D" id="1.10.8.60">
    <property type="match status" value="1"/>
</dbReference>
<dbReference type="Gene3D" id="3.40.50.300">
    <property type="entry name" value="P-loop containing nucleotide triphosphate hydrolases"/>
    <property type="match status" value="1"/>
</dbReference>
<dbReference type="Gene3D" id="1.10.10.10">
    <property type="entry name" value="Winged helix-like DNA-binding domain superfamily/Winged helix DNA-binding domain"/>
    <property type="match status" value="1"/>
</dbReference>
<dbReference type="HAMAP" id="MF_00016">
    <property type="entry name" value="DNA_HJ_migration_RuvB"/>
    <property type="match status" value="1"/>
</dbReference>
<dbReference type="InterPro" id="IPR003593">
    <property type="entry name" value="AAA+_ATPase"/>
</dbReference>
<dbReference type="InterPro" id="IPR041445">
    <property type="entry name" value="AAA_lid_4"/>
</dbReference>
<dbReference type="InterPro" id="IPR004605">
    <property type="entry name" value="DNA_helicase_Holl-junc_RuvB"/>
</dbReference>
<dbReference type="InterPro" id="IPR027417">
    <property type="entry name" value="P-loop_NTPase"/>
</dbReference>
<dbReference type="InterPro" id="IPR008824">
    <property type="entry name" value="RuvB-like_N"/>
</dbReference>
<dbReference type="InterPro" id="IPR008823">
    <property type="entry name" value="RuvB_C"/>
</dbReference>
<dbReference type="InterPro" id="IPR036388">
    <property type="entry name" value="WH-like_DNA-bd_sf"/>
</dbReference>
<dbReference type="InterPro" id="IPR036390">
    <property type="entry name" value="WH_DNA-bd_sf"/>
</dbReference>
<dbReference type="NCBIfam" id="NF000868">
    <property type="entry name" value="PRK00080.1"/>
    <property type="match status" value="1"/>
</dbReference>
<dbReference type="NCBIfam" id="TIGR00635">
    <property type="entry name" value="ruvB"/>
    <property type="match status" value="1"/>
</dbReference>
<dbReference type="PANTHER" id="PTHR42848">
    <property type="match status" value="1"/>
</dbReference>
<dbReference type="PANTHER" id="PTHR42848:SF1">
    <property type="entry name" value="HOLLIDAY JUNCTION BRANCH MIGRATION COMPLEX SUBUNIT RUVB"/>
    <property type="match status" value="1"/>
</dbReference>
<dbReference type="Pfam" id="PF17864">
    <property type="entry name" value="AAA_lid_4"/>
    <property type="match status" value="1"/>
</dbReference>
<dbReference type="Pfam" id="PF05491">
    <property type="entry name" value="RuvB_C"/>
    <property type="match status" value="1"/>
</dbReference>
<dbReference type="Pfam" id="PF05496">
    <property type="entry name" value="RuvB_N"/>
    <property type="match status" value="1"/>
</dbReference>
<dbReference type="SMART" id="SM00382">
    <property type="entry name" value="AAA"/>
    <property type="match status" value="1"/>
</dbReference>
<dbReference type="SUPFAM" id="SSF52540">
    <property type="entry name" value="P-loop containing nucleoside triphosphate hydrolases"/>
    <property type="match status" value="1"/>
</dbReference>
<dbReference type="SUPFAM" id="SSF46785">
    <property type="entry name" value="Winged helix' DNA-binding domain"/>
    <property type="match status" value="1"/>
</dbReference>
<proteinExistence type="inferred from homology"/>
<organism>
    <name type="scientific">Syntrophus aciditrophicus (strain SB)</name>
    <dbReference type="NCBI Taxonomy" id="56780"/>
    <lineage>
        <taxon>Bacteria</taxon>
        <taxon>Pseudomonadati</taxon>
        <taxon>Thermodesulfobacteriota</taxon>
        <taxon>Syntrophia</taxon>
        <taxon>Syntrophales</taxon>
        <taxon>Syntrophaceae</taxon>
        <taxon>Syntrophus</taxon>
    </lineage>
</organism>
<comment type="function">
    <text evidence="1">The RuvA-RuvB-RuvC complex processes Holliday junction (HJ) DNA during genetic recombination and DNA repair, while the RuvA-RuvB complex plays an important role in the rescue of blocked DNA replication forks via replication fork reversal (RFR). RuvA specifically binds to HJ cruciform DNA, conferring on it an open structure. The RuvB hexamer acts as an ATP-dependent pump, pulling dsDNA into and through the RuvAB complex. RuvB forms 2 homohexamers on either side of HJ DNA bound by 1 or 2 RuvA tetramers; 4 subunits per hexamer contact DNA at a time. Coordinated motions by a converter formed by DNA-disengaged RuvB subunits stimulates ATP hydrolysis and nucleotide exchange. Immobilization of the converter enables RuvB to convert the ATP-contained energy into a lever motion, pulling 2 nucleotides of DNA out of the RuvA tetramer per ATP hydrolyzed, thus driving DNA branch migration. The RuvB motors rotate together with the DNA substrate, which together with the progressing nucleotide cycle form the mechanistic basis for DNA recombination by continuous HJ branch migration. Branch migration allows RuvC to scan DNA until it finds its consensus sequence, where it cleaves and resolves cruciform DNA.</text>
</comment>
<comment type="catalytic activity">
    <reaction evidence="1">
        <text>ATP + H2O = ADP + phosphate + H(+)</text>
        <dbReference type="Rhea" id="RHEA:13065"/>
        <dbReference type="ChEBI" id="CHEBI:15377"/>
        <dbReference type="ChEBI" id="CHEBI:15378"/>
        <dbReference type="ChEBI" id="CHEBI:30616"/>
        <dbReference type="ChEBI" id="CHEBI:43474"/>
        <dbReference type="ChEBI" id="CHEBI:456216"/>
    </reaction>
</comment>
<comment type="subunit">
    <text evidence="1">Homohexamer. Forms an RuvA(8)-RuvB(12)-Holliday junction (HJ) complex. HJ DNA is sandwiched between 2 RuvA tetramers; dsDNA enters through RuvA and exits via RuvB. An RuvB hexamer assembles on each DNA strand where it exits the tetramer. Each RuvB hexamer is contacted by two RuvA subunits (via domain III) on 2 adjacent RuvB subunits; this complex drives branch migration. In the full resolvosome a probable DNA-RuvA(4)-RuvB(12)-RuvC(2) complex forms which resolves the HJ.</text>
</comment>
<comment type="subcellular location">
    <subcellularLocation>
        <location evidence="1">Cytoplasm</location>
    </subcellularLocation>
</comment>
<comment type="domain">
    <text evidence="1">Has 3 domains, the large (RuvB-L) and small ATPase (RuvB-S) domains and the C-terminal head (RuvB-H) domain. The head domain binds DNA, while the ATPase domains jointly bind ATP, ADP or are empty depending on the state of the subunit in the translocation cycle. During a single DNA translocation step the structure of each domain remains the same, but their relative positions change.</text>
</comment>
<comment type="similarity">
    <text evidence="1">Belongs to the RuvB family.</text>
</comment>
<feature type="chain" id="PRO_0000235423" description="Holliday junction branch migration complex subunit RuvB">
    <location>
        <begin position="1"/>
        <end position="340"/>
    </location>
</feature>
<feature type="region of interest" description="Large ATPase domain (RuvB-L)" evidence="1">
    <location>
        <begin position="1"/>
        <end position="183"/>
    </location>
</feature>
<feature type="region of interest" description="Small ATPAse domain (RuvB-S)" evidence="1">
    <location>
        <begin position="184"/>
        <end position="254"/>
    </location>
</feature>
<feature type="region of interest" description="Head domain (RuvB-H)" evidence="1">
    <location>
        <begin position="257"/>
        <end position="340"/>
    </location>
</feature>
<feature type="binding site" evidence="1">
    <location>
        <position position="22"/>
    </location>
    <ligand>
        <name>ATP</name>
        <dbReference type="ChEBI" id="CHEBI:30616"/>
    </ligand>
</feature>
<feature type="binding site" evidence="1">
    <location>
        <position position="23"/>
    </location>
    <ligand>
        <name>ATP</name>
        <dbReference type="ChEBI" id="CHEBI:30616"/>
    </ligand>
</feature>
<feature type="binding site" evidence="1">
    <location>
        <position position="64"/>
    </location>
    <ligand>
        <name>ATP</name>
        <dbReference type="ChEBI" id="CHEBI:30616"/>
    </ligand>
</feature>
<feature type="binding site" evidence="1">
    <location>
        <position position="67"/>
    </location>
    <ligand>
        <name>ATP</name>
        <dbReference type="ChEBI" id="CHEBI:30616"/>
    </ligand>
</feature>
<feature type="binding site" evidence="1">
    <location>
        <position position="68"/>
    </location>
    <ligand>
        <name>ATP</name>
        <dbReference type="ChEBI" id="CHEBI:30616"/>
    </ligand>
</feature>
<feature type="binding site" evidence="1">
    <location>
        <position position="68"/>
    </location>
    <ligand>
        <name>Mg(2+)</name>
        <dbReference type="ChEBI" id="CHEBI:18420"/>
    </ligand>
</feature>
<feature type="binding site" evidence="1">
    <location>
        <position position="69"/>
    </location>
    <ligand>
        <name>ATP</name>
        <dbReference type="ChEBI" id="CHEBI:30616"/>
    </ligand>
</feature>
<feature type="binding site" evidence="1">
    <location>
        <begin position="130"/>
        <end position="132"/>
    </location>
    <ligand>
        <name>ATP</name>
        <dbReference type="ChEBI" id="CHEBI:30616"/>
    </ligand>
</feature>
<feature type="binding site" evidence="1">
    <location>
        <position position="173"/>
    </location>
    <ligand>
        <name>ATP</name>
        <dbReference type="ChEBI" id="CHEBI:30616"/>
    </ligand>
</feature>
<feature type="binding site" evidence="1">
    <location>
        <position position="183"/>
    </location>
    <ligand>
        <name>ATP</name>
        <dbReference type="ChEBI" id="CHEBI:30616"/>
    </ligand>
</feature>
<feature type="binding site" evidence="1">
    <location>
        <position position="220"/>
    </location>
    <ligand>
        <name>ATP</name>
        <dbReference type="ChEBI" id="CHEBI:30616"/>
    </ligand>
</feature>
<feature type="binding site" evidence="1">
    <location>
        <position position="312"/>
    </location>
    <ligand>
        <name>DNA</name>
        <dbReference type="ChEBI" id="CHEBI:16991"/>
    </ligand>
</feature>
<feature type="binding site" evidence="1">
    <location>
        <position position="317"/>
    </location>
    <ligand>
        <name>DNA</name>
        <dbReference type="ChEBI" id="CHEBI:16991"/>
    </ligand>
</feature>
<evidence type="ECO:0000255" key="1">
    <source>
        <dbReference type="HAMAP-Rule" id="MF_00016"/>
    </source>
</evidence>
<keyword id="KW-0067">ATP-binding</keyword>
<keyword id="KW-0963">Cytoplasm</keyword>
<keyword id="KW-0227">DNA damage</keyword>
<keyword id="KW-0233">DNA recombination</keyword>
<keyword id="KW-0234">DNA repair</keyword>
<keyword id="KW-0238">DNA-binding</keyword>
<keyword id="KW-0378">Hydrolase</keyword>
<keyword id="KW-0547">Nucleotide-binding</keyword>
<keyword id="KW-1185">Reference proteome</keyword>
<sequence length="340" mass="38227">MKRDDLVSPECMDGDNVYETTLRPHSIKEYVGQKKIKKTLPIFVEAAQKRKEALDHVLLYGPPGLGKTTLALIIAREMGFNIKVTSGPVIERPGDLAAILTNLKDYDILFIDEIHRLPHSVEEILYPAMEDFYIDIVIGQGPSARSMKLDIPKFTLVGATTRAGLLTSPLRDRFGISFRLDYYAVEELTKIINRSASIMSIEIEHSGALEIAKRSRGTPRIANRLLKRVRDYAQVKGEGIIKRAVAVHALEMLEIDDRGFDQMDRSILLSIIENYGGGPVGIDTLCATVGEEKTTIEDVYEPYLIKEGYLQKTARGRIATKKAYEHFGKRKFEVGQKELF</sequence>